<reference key="1">
    <citation type="journal article" date="2008" name="PLoS Genet.">
        <title>Genomic islands in the pathogenic filamentous fungus Aspergillus fumigatus.</title>
        <authorList>
            <person name="Fedorova N.D."/>
            <person name="Khaldi N."/>
            <person name="Joardar V.S."/>
            <person name="Maiti R."/>
            <person name="Amedeo P."/>
            <person name="Anderson M.J."/>
            <person name="Crabtree J."/>
            <person name="Silva J.C."/>
            <person name="Badger J.H."/>
            <person name="Albarraq A."/>
            <person name="Angiuoli S."/>
            <person name="Bussey H."/>
            <person name="Bowyer P."/>
            <person name="Cotty P.J."/>
            <person name="Dyer P.S."/>
            <person name="Egan A."/>
            <person name="Galens K."/>
            <person name="Fraser-Liggett C.M."/>
            <person name="Haas B.J."/>
            <person name="Inman J.M."/>
            <person name="Kent R."/>
            <person name="Lemieux S."/>
            <person name="Malavazi I."/>
            <person name="Orvis J."/>
            <person name="Roemer T."/>
            <person name="Ronning C.M."/>
            <person name="Sundaram J.P."/>
            <person name="Sutton G."/>
            <person name="Turner G."/>
            <person name="Venter J.C."/>
            <person name="White O.R."/>
            <person name="Whitty B.R."/>
            <person name="Youngman P."/>
            <person name="Wolfe K.H."/>
            <person name="Goldman G.H."/>
            <person name="Wortman J.R."/>
            <person name="Jiang B."/>
            <person name="Denning D.W."/>
            <person name="Nierman W.C."/>
        </authorList>
    </citation>
    <scope>NUCLEOTIDE SEQUENCE [LARGE SCALE GENOMIC DNA]</scope>
    <source>
        <strain>ATCC 1020 / DSM 3700 / CBS 544.65 / FGSC A1164 / JCM 1740 / NRRL 181 / WB 181</strain>
    </source>
</reference>
<dbReference type="EC" id="1.14.13.9" evidence="1"/>
<dbReference type="EMBL" id="DS027698">
    <property type="protein sequence ID" value="EAW15956.1"/>
    <property type="molecule type" value="Genomic_DNA"/>
</dbReference>
<dbReference type="RefSeq" id="XP_001257853.1">
    <property type="nucleotide sequence ID" value="XM_001257852.1"/>
</dbReference>
<dbReference type="SMR" id="A1DMD5"/>
<dbReference type="STRING" id="331117.A1DMD5"/>
<dbReference type="EnsemblFungi" id="EAW15956">
    <property type="protein sequence ID" value="EAW15956"/>
    <property type="gene ID" value="NFIA_053020"/>
</dbReference>
<dbReference type="GeneID" id="4584368"/>
<dbReference type="KEGG" id="nfi:NFIA_053020"/>
<dbReference type="VEuPathDB" id="FungiDB:NFIA_053020"/>
<dbReference type="eggNOG" id="KOG2614">
    <property type="taxonomic scope" value="Eukaryota"/>
</dbReference>
<dbReference type="HOGENOM" id="CLU_023210_2_1_1"/>
<dbReference type="OMA" id="REFMFIA"/>
<dbReference type="OrthoDB" id="10053569at2759"/>
<dbReference type="UniPathway" id="UPA00253">
    <property type="reaction ID" value="UER00328"/>
</dbReference>
<dbReference type="Proteomes" id="UP000006702">
    <property type="component" value="Unassembled WGS sequence"/>
</dbReference>
<dbReference type="GO" id="GO:0005741">
    <property type="term" value="C:mitochondrial outer membrane"/>
    <property type="evidence" value="ECO:0007669"/>
    <property type="project" value="UniProtKB-SubCell"/>
</dbReference>
<dbReference type="GO" id="GO:0071949">
    <property type="term" value="F:FAD binding"/>
    <property type="evidence" value="ECO:0007669"/>
    <property type="project" value="InterPro"/>
</dbReference>
<dbReference type="GO" id="GO:0004502">
    <property type="term" value="F:kynurenine 3-monooxygenase activity"/>
    <property type="evidence" value="ECO:0007669"/>
    <property type="project" value="UniProtKB-UniRule"/>
</dbReference>
<dbReference type="GO" id="GO:0034354">
    <property type="term" value="P:'de novo' NAD biosynthetic process from L-tryptophan"/>
    <property type="evidence" value="ECO:0007669"/>
    <property type="project" value="UniProtKB-UniRule"/>
</dbReference>
<dbReference type="GO" id="GO:0043420">
    <property type="term" value="P:anthranilate metabolic process"/>
    <property type="evidence" value="ECO:0007669"/>
    <property type="project" value="UniProtKB-UniRule"/>
</dbReference>
<dbReference type="GO" id="GO:0070189">
    <property type="term" value="P:kynurenine metabolic process"/>
    <property type="evidence" value="ECO:0007669"/>
    <property type="project" value="TreeGrafter"/>
</dbReference>
<dbReference type="GO" id="GO:0006569">
    <property type="term" value="P:L-tryptophan catabolic process"/>
    <property type="evidence" value="ECO:0007669"/>
    <property type="project" value="UniProtKB-UniRule"/>
</dbReference>
<dbReference type="GO" id="GO:0019805">
    <property type="term" value="P:quinolinate biosynthetic process"/>
    <property type="evidence" value="ECO:0007669"/>
    <property type="project" value="UniProtKB-UniRule"/>
</dbReference>
<dbReference type="FunFam" id="3.50.50.60:FF:000129">
    <property type="entry name" value="Kynurenine 3-monooxygenase"/>
    <property type="match status" value="1"/>
</dbReference>
<dbReference type="Gene3D" id="3.50.50.60">
    <property type="entry name" value="FAD/NAD(P)-binding domain"/>
    <property type="match status" value="1"/>
</dbReference>
<dbReference type="HAMAP" id="MF_01971">
    <property type="entry name" value="Kynurenine_monooxygenase"/>
    <property type="match status" value="1"/>
</dbReference>
<dbReference type="InterPro" id="IPR002938">
    <property type="entry name" value="FAD-bd"/>
</dbReference>
<dbReference type="InterPro" id="IPR036188">
    <property type="entry name" value="FAD/NAD-bd_sf"/>
</dbReference>
<dbReference type="InterPro" id="IPR027545">
    <property type="entry name" value="Kynurenine_monooxygenase"/>
</dbReference>
<dbReference type="PANTHER" id="PTHR46028">
    <property type="entry name" value="KYNURENINE 3-MONOOXYGENASE"/>
    <property type="match status" value="1"/>
</dbReference>
<dbReference type="PANTHER" id="PTHR46028:SF2">
    <property type="entry name" value="KYNURENINE 3-MONOOXYGENASE"/>
    <property type="match status" value="1"/>
</dbReference>
<dbReference type="Pfam" id="PF01494">
    <property type="entry name" value="FAD_binding_3"/>
    <property type="match status" value="1"/>
</dbReference>
<dbReference type="PRINTS" id="PR00420">
    <property type="entry name" value="RNGMNOXGNASE"/>
</dbReference>
<dbReference type="SUPFAM" id="SSF51905">
    <property type="entry name" value="FAD/NAD(P)-binding domain"/>
    <property type="match status" value="1"/>
</dbReference>
<proteinExistence type="inferred from homology"/>
<evidence type="ECO:0000255" key="1">
    <source>
        <dbReference type="HAMAP-Rule" id="MF_03018"/>
    </source>
</evidence>
<name>KMO_NEOFI</name>
<gene>
    <name type="primary">bna4</name>
    <name type="ORF">NFIA_053020</name>
</gene>
<sequence>MADTVRKKQKLVVVGAGPVGSLAALYAAARGDEVEIYELRGDLRDPSTVPLNFTKSINLALSERGITAMRHSNREDLINNVLRGTIPMHGRMIHGRDRGQLWEAAQAYDVHGRAINAVDRSTLNNALLDELECTPNVKLFFNHKLTGADFNARKAWFERRVPGEAPLPNSANRVPEIEVDFDFMIGADGAHSAARYHMMKFARVDYQQEYIDTLWCEFRIPPTEDGDFRISPNHLHIWPGGEFMFIALPSADKSFTCTLFAPAAHYKHLGSSPQNLVESFKDHFPGVCPELISPGDLQEQFATNPHLPLISLKCKPHHYNSSIVIVGDAAHAVLPFYGQGLNAGLEDIRVLFEFLDKHGSYNLDASPDARREARAKAFQAYTDQRCADTHAINDLSKQNYLEMRWGVKTPLYKLRKSVEEALDRYVPRLGWQTQYSRVSFSNQRYSEVIQSARWQGRILGLGLATTLISTVGVIAYVFWKKPRQHSPGGLLRYSWRRLSSIWVSMFRTIAYA</sequence>
<protein>
    <recommendedName>
        <fullName evidence="1">Kynurenine 3-monooxygenase</fullName>
        <ecNumber evidence="1">1.14.13.9</ecNumber>
    </recommendedName>
    <alternativeName>
        <fullName evidence="1">Biosynthesis of nicotinic acid protein 4</fullName>
    </alternativeName>
    <alternativeName>
        <fullName evidence="1">Kynurenine 3-hydroxylase</fullName>
    </alternativeName>
</protein>
<feature type="chain" id="PRO_0000361929" description="Kynurenine 3-monooxygenase">
    <location>
        <begin position="1"/>
        <end position="512"/>
    </location>
</feature>
<organism>
    <name type="scientific">Neosartorya fischeri (strain ATCC 1020 / DSM 3700 / CBS 544.65 / FGSC A1164 / JCM 1740 / NRRL 181 / WB 181)</name>
    <name type="common">Aspergillus fischerianus</name>
    <dbReference type="NCBI Taxonomy" id="331117"/>
    <lineage>
        <taxon>Eukaryota</taxon>
        <taxon>Fungi</taxon>
        <taxon>Dikarya</taxon>
        <taxon>Ascomycota</taxon>
        <taxon>Pezizomycotina</taxon>
        <taxon>Eurotiomycetes</taxon>
        <taxon>Eurotiomycetidae</taxon>
        <taxon>Eurotiales</taxon>
        <taxon>Aspergillaceae</taxon>
        <taxon>Aspergillus</taxon>
        <taxon>Aspergillus subgen. Fumigati</taxon>
    </lineage>
</organism>
<comment type="function">
    <text evidence="1">Catalyzes the hydroxylation of L-kynurenine (L-Kyn) to form 3-hydroxy-L-kynurenine (L-3OHKyn). Required for synthesis of quinolinic acid.</text>
</comment>
<comment type="catalytic activity">
    <reaction evidence="1">
        <text>L-kynurenine + NADPH + O2 + H(+) = 3-hydroxy-L-kynurenine + NADP(+) + H2O</text>
        <dbReference type="Rhea" id="RHEA:20545"/>
        <dbReference type="ChEBI" id="CHEBI:15377"/>
        <dbReference type="ChEBI" id="CHEBI:15378"/>
        <dbReference type="ChEBI" id="CHEBI:15379"/>
        <dbReference type="ChEBI" id="CHEBI:57783"/>
        <dbReference type="ChEBI" id="CHEBI:57959"/>
        <dbReference type="ChEBI" id="CHEBI:58125"/>
        <dbReference type="ChEBI" id="CHEBI:58349"/>
        <dbReference type="EC" id="1.14.13.9"/>
    </reaction>
</comment>
<comment type="cofactor">
    <cofactor evidence="1">
        <name>FAD</name>
        <dbReference type="ChEBI" id="CHEBI:57692"/>
    </cofactor>
</comment>
<comment type="pathway">
    <text evidence="1">Cofactor biosynthesis; NAD(+) biosynthesis; quinolinate from L-kynurenine: step 1/3.</text>
</comment>
<comment type="subcellular location">
    <subcellularLocation>
        <location evidence="1">Mitochondrion outer membrane</location>
    </subcellularLocation>
</comment>
<comment type="similarity">
    <text evidence="1">Belongs to the aromatic-ring hydroxylase family. KMO subfamily.</text>
</comment>
<keyword id="KW-0274">FAD</keyword>
<keyword id="KW-0285">Flavoprotein</keyword>
<keyword id="KW-0472">Membrane</keyword>
<keyword id="KW-0496">Mitochondrion</keyword>
<keyword id="KW-1000">Mitochondrion outer membrane</keyword>
<keyword id="KW-0503">Monooxygenase</keyword>
<keyword id="KW-0521">NADP</keyword>
<keyword id="KW-0560">Oxidoreductase</keyword>
<keyword id="KW-0662">Pyridine nucleotide biosynthesis</keyword>
<keyword id="KW-1185">Reference proteome</keyword>
<accession>A1DMD5</accession>